<proteinExistence type="inferred from homology"/>
<feature type="initiator methionine" description="Removed" evidence="1">
    <location>
        <position position="1"/>
    </location>
</feature>
<feature type="chain" id="PRO_0000136244" description="Histidine--tRNA ligase">
    <location>
        <begin position="2"/>
        <end position="424"/>
    </location>
</feature>
<protein>
    <recommendedName>
        <fullName evidence="2">Histidine--tRNA ligase</fullName>
        <ecNumber evidence="2">6.1.1.21</ecNumber>
    </recommendedName>
    <alternativeName>
        <fullName evidence="2">Histidyl-tRNA synthetase</fullName>
        <shortName evidence="2">HisRS</shortName>
    </alternativeName>
</protein>
<name>SYH_SALTI</name>
<dbReference type="EC" id="6.1.1.21" evidence="2"/>
<dbReference type="EMBL" id="AL513382">
    <property type="protein sequence ID" value="CAD02725.1"/>
    <property type="molecule type" value="Genomic_DNA"/>
</dbReference>
<dbReference type="EMBL" id="AE014613">
    <property type="protein sequence ID" value="AAO68057.1"/>
    <property type="molecule type" value="Genomic_DNA"/>
</dbReference>
<dbReference type="RefSeq" id="NP_457054.1">
    <property type="nucleotide sequence ID" value="NC_003198.1"/>
</dbReference>
<dbReference type="RefSeq" id="WP_001107147.1">
    <property type="nucleotide sequence ID" value="NZ_WSUR01000007.1"/>
</dbReference>
<dbReference type="SMR" id="Q8Z4P4"/>
<dbReference type="STRING" id="220341.gene:17586659"/>
<dbReference type="KEGG" id="stt:t0334"/>
<dbReference type="KEGG" id="sty:STY2767"/>
<dbReference type="PATRIC" id="fig|220341.7.peg.2809"/>
<dbReference type="eggNOG" id="COG0124">
    <property type="taxonomic scope" value="Bacteria"/>
</dbReference>
<dbReference type="HOGENOM" id="CLU_025113_1_1_6"/>
<dbReference type="OMA" id="CGGGNFK"/>
<dbReference type="OrthoDB" id="9800814at2"/>
<dbReference type="Proteomes" id="UP000000541">
    <property type="component" value="Chromosome"/>
</dbReference>
<dbReference type="Proteomes" id="UP000002670">
    <property type="component" value="Chromosome"/>
</dbReference>
<dbReference type="GO" id="GO:0005737">
    <property type="term" value="C:cytoplasm"/>
    <property type="evidence" value="ECO:0007669"/>
    <property type="project" value="UniProtKB-SubCell"/>
</dbReference>
<dbReference type="GO" id="GO:0005524">
    <property type="term" value="F:ATP binding"/>
    <property type="evidence" value="ECO:0007669"/>
    <property type="project" value="UniProtKB-UniRule"/>
</dbReference>
<dbReference type="GO" id="GO:0004821">
    <property type="term" value="F:histidine-tRNA ligase activity"/>
    <property type="evidence" value="ECO:0007669"/>
    <property type="project" value="UniProtKB-UniRule"/>
</dbReference>
<dbReference type="GO" id="GO:0006427">
    <property type="term" value="P:histidyl-tRNA aminoacylation"/>
    <property type="evidence" value="ECO:0007669"/>
    <property type="project" value="UniProtKB-UniRule"/>
</dbReference>
<dbReference type="CDD" id="cd00773">
    <property type="entry name" value="HisRS-like_core"/>
    <property type="match status" value="1"/>
</dbReference>
<dbReference type="CDD" id="cd00859">
    <property type="entry name" value="HisRS_anticodon"/>
    <property type="match status" value="1"/>
</dbReference>
<dbReference type="FunFam" id="3.30.930.10:FF:000005">
    <property type="entry name" value="Histidine--tRNA ligase"/>
    <property type="match status" value="1"/>
</dbReference>
<dbReference type="FunFam" id="3.40.50.800:FF:000007">
    <property type="entry name" value="Histidine--tRNA ligase"/>
    <property type="match status" value="1"/>
</dbReference>
<dbReference type="Gene3D" id="3.40.50.800">
    <property type="entry name" value="Anticodon-binding domain"/>
    <property type="match status" value="1"/>
</dbReference>
<dbReference type="Gene3D" id="3.30.930.10">
    <property type="entry name" value="Bira Bifunctional Protein, Domain 2"/>
    <property type="match status" value="1"/>
</dbReference>
<dbReference type="HAMAP" id="MF_00127">
    <property type="entry name" value="His_tRNA_synth"/>
    <property type="match status" value="1"/>
</dbReference>
<dbReference type="InterPro" id="IPR006195">
    <property type="entry name" value="aa-tRNA-synth_II"/>
</dbReference>
<dbReference type="InterPro" id="IPR045864">
    <property type="entry name" value="aa-tRNA-synth_II/BPL/LPL"/>
</dbReference>
<dbReference type="InterPro" id="IPR004154">
    <property type="entry name" value="Anticodon-bd"/>
</dbReference>
<dbReference type="InterPro" id="IPR036621">
    <property type="entry name" value="Anticodon-bd_dom_sf"/>
</dbReference>
<dbReference type="InterPro" id="IPR015807">
    <property type="entry name" value="His-tRNA-ligase"/>
</dbReference>
<dbReference type="InterPro" id="IPR041715">
    <property type="entry name" value="HisRS-like_core"/>
</dbReference>
<dbReference type="InterPro" id="IPR004516">
    <property type="entry name" value="HisRS/HisZ"/>
</dbReference>
<dbReference type="InterPro" id="IPR033656">
    <property type="entry name" value="HisRS_anticodon"/>
</dbReference>
<dbReference type="NCBIfam" id="TIGR00442">
    <property type="entry name" value="hisS"/>
    <property type="match status" value="1"/>
</dbReference>
<dbReference type="PANTHER" id="PTHR43707:SF1">
    <property type="entry name" value="HISTIDINE--TRNA LIGASE, MITOCHONDRIAL-RELATED"/>
    <property type="match status" value="1"/>
</dbReference>
<dbReference type="PANTHER" id="PTHR43707">
    <property type="entry name" value="HISTIDYL-TRNA SYNTHETASE"/>
    <property type="match status" value="1"/>
</dbReference>
<dbReference type="Pfam" id="PF03129">
    <property type="entry name" value="HGTP_anticodon"/>
    <property type="match status" value="1"/>
</dbReference>
<dbReference type="Pfam" id="PF13393">
    <property type="entry name" value="tRNA-synt_His"/>
    <property type="match status" value="1"/>
</dbReference>
<dbReference type="PIRSF" id="PIRSF001549">
    <property type="entry name" value="His-tRNA_synth"/>
    <property type="match status" value="1"/>
</dbReference>
<dbReference type="SUPFAM" id="SSF52954">
    <property type="entry name" value="Class II aaRS ABD-related"/>
    <property type="match status" value="1"/>
</dbReference>
<dbReference type="SUPFAM" id="SSF55681">
    <property type="entry name" value="Class II aaRS and biotin synthetases"/>
    <property type="match status" value="1"/>
</dbReference>
<dbReference type="PROSITE" id="PS50862">
    <property type="entry name" value="AA_TRNA_LIGASE_II"/>
    <property type="match status" value="1"/>
</dbReference>
<gene>
    <name evidence="2" type="primary">hisS</name>
    <name type="ordered locus">STY2767</name>
    <name type="ordered locus">t0334</name>
</gene>
<sequence length="424" mass="46971">MAKNIQAIRGMNDYLPGETAIWQRIEGTLKNVLGSYGYSEIRLPIVEQTPLFKRAIGEVTDVVEKEMYTFEDRNGDSLTLRPEGTAGCVRAGIEHGLLYNQEQRLWYIGPMFRHERPQKGRYRQFHQLGAEVFGLQGPDIDAELIMLTARWWRALGISEHVSLELNSIGSLEARANYRDALVAFLEQHQETLDEDCKRRMYTNPLRVLDSKNPDVQALLNDAPVLGDYLDDDSREHFAGLCKLLDAAGIAYTVNQRLVRGLDYYNRTVFEWVTNSLGSQGTVCAGGRYDGLVEQLGGRATPAVGFAMGLERLVLLVQAVNPEFIASPVVDIYLVAAGAQTQSAAMTLAERLRDEMPGVKLMTNHGGGNFKKQFARADKWGARIALVLGESEVADGTVVVKDLRSGEQTAVAQDSVAAHLRTLLG</sequence>
<organism>
    <name type="scientific">Salmonella typhi</name>
    <dbReference type="NCBI Taxonomy" id="90370"/>
    <lineage>
        <taxon>Bacteria</taxon>
        <taxon>Pseudomonadati</taxon>
        <taxon>Pseudomonadota</taxon>
        <taxon>Gammaproteobacteria</taxon>
        <taxon>Enterobacterales</taxon>
        <taxon>Enterobacteriaceae</taxon>
        <taxon>Salmonella</taxon>
    </lineage>
</organism>
<accession>Q8Z4P4</accession>
<reference key="1">
    <citation type="journal article" date="2001" name="Nature">
        <title>Complete genome sequence of a multiple drug resistant Salmonella enterica serovar Typhi CT18.</title>
        <authorList>
            <person name="Parkhill J."/>
            <person name="Dougan G."/>
            <person name="James K.D."/>
            <person name="Thomson N.R."/>
            <person name="Pickard D."/>
            <person name="Wain J."/>
            <person name="Churcher C.M."/>
            <person name="Mungall K.L."/>
            <person name="Bentley S.D."/>
            <person name="Holden M.T.G."/>
            <person name="Sebaihia M."/>
            <person name="Baker S."/>
            <person name="Basham D."/>
            <person name="Brooks K."/>
            <person name="Chillingworth T."/>
            <person name="Connerton P."/>
            <person name="Cronin A."/>
            <person name="Davis P."/>
            <person name="Davies R.M."/>
            <person name="Dowd L."/>
            <person name="White N."/>
            <person name="Farrar J."/>
            <person name="Feltwell T."/>
            <person name="Hamlin N."/>
            <person name="Haque A."/>
            <person name="Hien T.T."/>
            <person name="Holroyd S."/>
            <person name="Jagels K."/>
            <person name="Krogh A."/>
            <person name="Larsen T.S."/>
            <person name="Leather S."/>
            <person name="Moule S."/>
            <person name="O'Gaora P."/>
            <person name="Parry C."/>
            <person name="Quail M.A."/>
            <person name="Rutherford K.M."/>
            <person name="Simmonds M."/>
            <person name="Skelton J."/>
            <person name="Stevens K."/>
            <person name="Whitehead S."/>
            <person name="Barrell B.G."/>
        </authorList>
    </citation>
    <scope>NUCLEOTIDE SEQUENCE [LARGE SCALE GENOMIC DNA]</scope>
    <source>
        <strain>CT18</strain>
    </source>
</reference>
<reference key="2">
    <citation type="journal article" date="2003" name="J. Bacteriol.">
        <title>Comparative genomics of Salmonella enterica serovar Typhi strains Ty2 and CT18.</title>
        <authorList>
            <person name="Deng W."/>
            <person name="Liou S.-R."/>
            <person name="Plunkett G. III"/>
            <person name="Mayhew G.F."/>
            <person name="Rose D.J."/>
            <person name="Burland V."/>
            <person name="Kodoyianni V."/>
            <person name="Schwartz D.C."/>
            <person name="Blattner F.R."/>
        </authorList>
    </citation>
    <scope>NUCLEOTIDE SEQUENCE [LARGE SCALE GENOMIC DNA]</scope>
    <source>
        <strain>ATCC 700931 / Ty2</strain>
    </source>
</reference>
<evidence type="ECO:0000250" key="1"/>
<evidence type="ECO:0000255" key="2">
    <source>
        <dbReference type="HAMAP-Rule" id="MF_00127"/>
    </source>
</evidence>
<keyword id="KW-0030">Aminoacyl-tRNA synthetase</keyword>
<keyword id="KW-0067">ATP-binding</keyword>
<keyword id="KW-0963">Cytoplasm</keyword>
<keyword id="KW-0436">Ligase</keyword>
<keyword id="KW-0547">Nucleotide-binding</keyword>
<keyword id="KW-0648">Protein biosynthesis</keyword>
<comment type="catalytic activity">
    <reaction evidence="2">
        <text>tRNA(His) + L-histidine + ATP = L-histidyl-tRNA(His) + AMP + diphosphate + H(+)</text>
        <dbReference type="Rhea" id="RHEA:17313"/>
        <dbReference type="Rhea" id="RHEA-COMP:9665"/>
        <dbReference type="Rhea" id="RHEA-COMP:9689"/>
        <dbReference type="ChEBI" id="CHEBI:15378"/>
        <dbReference type="ChEBI" id="CHEBI:30616"/>
        <dbReference type="ChEBI" id="CHEBI:33019"/>
        <dbReference type="ChEBI" id="CHEBI:57595"/>
        <dbReference type="ChEBI" id="CHEBI:78442"/>
        <dbReference type="ChEBI" id="CHEBI:78527"/>
        <dbReference type="ChEBI" id="CHEBI:456215"/>
        <dbReference type="EC" id="6.1.1.21"/>
    </reaction>
</comment>
<comment type="subunit">
    <text evidence="2">Homodimer.</text>
</comment>
<comment type="subcellular location">
    <subcellularLocation>
        <location evidence="2">Cytoplasm</location>
    </subcellularLocation>
</comment>
<comment type="similarity">
    <text evidence="2">Belongs to the class-II aminoacyl-tRNA synthetase family.</text>
</comment>